<reference key="1">
    <citation type="journal article" date="2009" name="BMC Genomics">
        <title>Metabolic analysis of the soil microbe Dechloromonas aromatica str. RCB: indications of a surprisingly complex life-style and cryptic anaerobic pathways for aromatic degradation.</title>
        <authorList>
            <person name="Salinero K.K."/>
            <person name="Keller K."/>
            <person name="Feil W.S."/>
            <person name="Feil H."/>
            <person name="Trong S."/>
            <person name="Di Bartolo G."/>
            <person name="Lapidus A."/>
        </authorList>
    </citation>
    <scope>NUCLEOTIDE SEQUENCE [LARGE SCALE GENOMIC DNA]</scope>
    <source>
        <strain>RCB</strain>
    </source>
</reference>
<keyword id="KW-0030">Aminoacyl-tRNA synthetase</keyword>
<keyword id="KW-0067">ATP-binding</keyword>
<keyword id="KW-0963">Cytoplasm</keyword>
<keyword id="KW-0436">Ligase</keyword>
<keyword id="KW-0479">Metal-binding</keyword>
<keyword id="KW-0547">Nucleotide-binding</keyword>
<keyword id="KW-0648">Protein biosynthesis</keyword>
<keyword id="KW-0862">Zinc</keyword>
<evidence type="ECO:0000255" key="1">
    <source>
        <dbReference type="HAMAP-Rule" id="MF_00041"/>
    </source>
</evidence>
<accession>Q47HK6</accession>
<dbReference type="EC" id="6.1.1.16" evidence="1"/>
<dbReference type="EMBL" id="CP000089">
    <property type="protein sequence ID" value="AAZ45675.1"/>
    <property type="molecule type" value="Genomic_DNA"/>
</dbReference>
<dbReference type="SMR" id="Q47HK6"/>
<dbReference type="STRING" id="159087.Daro_0919"/>
<dbReference type="KEGG" id="dar:Daro_0919"/>
<dbReference type="eggNOG" id="COG0215">
    <property type="taxonomic scope" value="Bacteria"/>
</dbReference>
<dbReference type="HOGENOM" id="CLU_013528_0_1_4"/>
<dbReference type="OrthoDB" id="9815130at2"/>
<dbReference type="GO" id="GO:0005829">
    <property type="term" value="C:cytosol"/>
    <property type="evidence" value="ECO:0007669"/>
    <property type="project" value="TreeGrafter"/>
</dbReference>
<dbReference type="GO" id="GO:0005524">
    <property type="term" value="F:ATP binding"/>
    <property type="evidence" value="ECO:0007669"/>
    <property type="project" value="UniProtKB-UniRule"/>
</dbReference>
<dbReference type="GO" id="GO:0004817">
    <property type="term" value="F:cysteine-tRNA ligase activity"/>
    <property type="evidence" value="ECO:0007669"/>
    <property type="project" value="UniProtKB-UniRule"/>
</dbReference>
<dbReference type="GO" id="GO:0008270">
    <property type="term" value="F:zinc ion binding"/>
    <property type="evidence" value="ECO:0007669"/>
    <property type="project" value="UniProtKB-UniRule"/>
</dbReference>
<dbReference type="GO" id="GO:0006423">
    <property type="term" value="P:cysteinyl-tRNA aminoacylation"/>
    <property type="evidence" value="ECO:0007669"/>
    <property type="project" value="UniProtKB-UniRule"/>
</dbReference>
<dbReference type="CDD" id="cd07963">
    <property type="entry name" value="Anticodon_Ia_Cys"/>
    <property type="match status" value="1"/>
</dbReference>
<dbReference type="CDD" id="cd00672">
    <property type="entry name" value="CysRS_core"/>
    <property type="match status" value="1"/>
</dbReference>
<dbReference type="FunFam" id="3.40.50.620:FF:000009">
    <property type="entry name" value="Cysteine--tRNA ligase"/>
    <property type="match status" value="1"/>
</dbReference>
<dbReference type="Gene3D" id="1.20.120.1910">
    <property type="entry name" value="Cysteine-tRNA ligase, C-terminal anti-codon recognition domain"/>
    <property type="match status" value="1"/>
</dbReference>
<dbReference type="Gene3D" id="3.40.50.620">
    <property type="entry name" value="HUPs"/>
    <property type="match status" value="1"/>
</dbReference>
<dbReference type="HAMAP" id="MF_00041">
    <property type="entry name" value="Cys_tRNA_synth"/>
    <property type="match status" value="1"/>
</dbReference>
<dbReference type="InterPro" id="IPR015803">
    <property type="entry name" value="Cys-tRNA-ligase"/>
</dbReference>
<dbReference type="InterPro" id="IPR015273">
    <property type="entry name" value="Cys-tRNA-synt_Ia_DALR"/>
</dbReference>
<dbReference type="InterPro" id="IPR024909">
    <property type="entry name" value="Cys-tRNA/MSH_ligase"/>
</dbReference>
<dbReference type="InterPro" id="IPR056411">
    <property type="entry name" value="CysS_C"/>
</dbReference>
<dbReference type="InterPro" id="IPR014729">
    <property type="entry name" value="Rossmann-like_a/b/a_fold"/>
</dbReference>
<dbReference type="InterPro" id="IPR032678">
    <property type="entry name" value="tRNA-synt_1_cat_dom"/>
</dbReference>
<dbReference type="InterPro" id="IPR009080">
    <property type="entry name" value="tRNAsynth_Ia_anticodon-bd"/>
</dbReference>
<dbReference type="NCBIfam" id="TIGR00435">
    <property type="entry name" value="cysS"/>
    <property type="match status" value="1"/>
</dbReference>
<dbReference type="PANTHER" id="PTHR10890:SF3">
    <property type="entry name" value="CYSTEINE--TRNA LIGASE, CYTOPLASMIC"/>
    <property type="match status" value="1"/>
</dbReference>
<dbReference type="PANTHER" id="PTHR10890">
    <property type="entry name" value="CYSTEINYL-TRNA SYNTHETASE"/>
    <property type="match status" value="1"/>
</dbReference>
<dbReference type="Pfam" id="PF23493">
    <property type="entry name" value="CysS_C"/>
    <property type="match status" value="1"/>
</dbReference>
<dbReference type="Pfam" id="PF09190">
    <property type="entry name" value="DALR_2"/>
    <property type="match status" value="1"/>
</dbReference>
<dbReference type="Pfam" id="PF01406">
    <property type="entry name" value="tRNA-synt_1e"/>
    <property type="match status" value="1"/>
</dbReference>
<dbReference type="PRINTS" id="PR00983">
    <property type="entry name" value="TRNASYNTHCYS"/>
</dbReference>
<dbReference type="SMART" id="SM00840">
    <property type="entry name" value="DALR_2"/>
    <property type="match status" value="1"/>
</dbReference>
<dbReference type="SUPFAM" id="SSF47323">
    <property type="entry name" value="Anticodon-binding domain of a subclass of class I aminoacyl-tRNA synthetases"/>
    <property type="match status" value="1"/>
</dbReference>
<dbReference type="SUPFAM" id="SSF52374">
    <property type="entry name" value="Nucleotidylyl transferase"/>
    <property type="match status" value="1"/>
</dbReference>
<proteinExistence type="inferred from homology"/>
<name>SYC_DECAR</name>
<gene>
    <name evidence="1" type="primary">cysS</name>
    <name type="ordered locus">Daro_0919</name>
</gene>
<comment type="catalytic activity">
    <reaction evidence="1">
        <text>tRNA(Cys) + L-cysteine + ATP = L-cysteinyl-tRNA(Cys) + AMP + diphosphate</text>
        <dbReference type="Rhea" id="RHEA:17773"/>
        <dbReference type="Rhea" id="RHEA-COMP:9661"/>
        <dbReference type="Rhea" id="RHEA-COMP:9679"/>
        <dbReference type="ChEBI" id="CHEBI:30616"/>
        <dbReference type="ChEBI" id="CHEBI:33019"/>
        <dbReference type="ChEBI" id="CHEBI:35235"/>
        <dbReference type="ChEBI" id="CHEBI:78442"/>
        <dbReference type="ChEBI" id="CHEBI:78517"/>
        <dbReference type="ChEBI" id="CHEBI:456215"/>
        <dbReference type="EC" id="6.1.1.16"/>
    </reaction>
</comment>
<comment type="cofactor">
    <cofactor evidence="1">
        <name>Zn(2+)</name>
        <dbReference type="ChEBI" id="CHEBI:29105"/>
    </cofactor>
    <text evidence="1">Binds 1 zinc ion per subunit.</text>
</comment>
<comment type="subunit">
    <text evidence="1">Monomer.</text>
</comment>
<comment type="subcellular location">
    <subcellularLocation>
        <location evidence="1">Cytoplasm</location>
    </subcellularLocation>
</comment>
<comment type="similarity">
    <text evidence="1">Belongs to the class-I aminoacyl-tRNA synthetase family.</text>
</comment>
<protein>
    <recommendedName>
        <fullName evidence="1">Cysteine--tRNA ligase</fullName>
        <ecNumber evidence="1">6.1.1.16</ecNumber>
    </recommendedName>
    <alternativeName>
        <fullName evidence="1">Cysteinyl-tRNA synthetase</fullName>
        <shortName evidence="1">CysRS</shortName>
    </alternativeName>
</protein>
<sequence length="456" mass="51009">MLKIYNSLKREKQVFTPIEPNKVRMYVCGMTVYDYCHLGHARVMVVFDMVYRWLKASGYDVTYVRNITDIDDKIIKRAIENGETIQQLTNRFIAFMHEDADALGVQRPDYEPRATEYVPEMLDLIGKLEANGLAYQASDGDVNYAVRKFPGYGKLSGKSLDDLRAGERVEVDSAKQDPLDFVLWKHAKPGEPAWQSPWGDGRPGWHIECSAMSSKLLGQHFDIHGGGQDLQFPHHENEIAQSEGANCCNFVNYWMHNGFVRVDNEKMSKSLGNFFTIRTVLEQFDAEVVRFFILRAHYRSPLNYSDAHLDDARRSLDSLYFALRDVPPAAADIDWSNEFAGRFAAALNEDFDSHGAIAVLFELAAEVNRQKSAGLSCLLKGLGGVIGLLEREPSAYLQGGAGVGGLDEAAVGQMIVDRAAAKKAKNFAEADRIRDELKAAGIILDDSPQGTTWRRA</sequence>
<organism>
    <name type="scientific">Dechloromonas aromatica (strain RCB)</name>
    <dbReference type="NCBI Taxonomy" id="159087"/>
    <lineage>
        <taxon>Bacteria</taxon>
        <taxon>Pseudomonadati</taxon>
        <taxon>Pseudomonadota</taxon>
        <taxon>Betaproteobacteria</taxon>
        <taxon>Rhodocyclales</taxon>
        <taxon>Azonexaceae</taxon>
        <taxon>Dechloromonas</taxon>
    </lineage>
</organism>
<feature type="chain" id="PRO_0000240906" description="Cysteine--tRNA ligase">
    <location>
        <begin position="1"/>
        <end position="456"/>
    </location>
</feature>
<feature type="short sequence motif" description="'HIGH' region">
    <location>
        <begin position="30"/>
        <end position="40"/>
    </location>
</feature>
<feature type="short sequence motif" description="'KMSKS' region">
    <location>
        <begin position="266"/>
        <end position="270"/>
    </location>
</feature>
<feature type="binding site" evidence="1">
    <location>
        <position position="28"/>
    </location>
    <ligand>
        <name>Zn(2+)</name>
        <dbReference type="ChEBI" id="CHEBI:29105"/>
    </ligand>
</feature>
<feature type="binding site" evidence="1">
    <location>
        <position position="209"/>
    </location>
    <ligand>
        <name>Zn(2+)</name>
        <dbReference type="ChEBI" id="CHEBI:29105"/>
    </ligand>
</feature>
<feature type="binding site" evidence="1">
    <location>
        <position position="234"/>
    </location>
    <ligand>
        <name>Zn(2+)</name>
        <dbReference type="ChEBI" id="CHEBI:29105"/>
    </ligand>
</feature>
<feature type="binding site" evidence="1">
    <location>
        <position position="238"/>
    </location>
    <ligand>
        <name>Zn(2+)</name>
        <dbReference type="ChEBI" id="CHEBI:29105"/>
    </ligand>
</feature>
<feature type="binding site" evidence="1">
    <location>
        <position position="269"/>
    </location>
    <ligand>
        <name>ATP</name>
        <dbReference type="ChEBI" id="CHEBI:30616"/>
    </ligand>
</feature>